<accession>P36143</accession>
<accession>D6VXB9</accession>
<sequence length="616" mass="69724">MYKKLAIATLLYSADYLPGVFALGHQVNKLLEEAGKKGDIETCLIVTTSLFNGTLSELAKNILQSIYTKIVLVEPLNCQEESIQKNSENLALLERPELSFALIKARLWELTQFEQVLYLDSDTLPLNKEFLKLFDIMSKQTTSQVGAIADIGWPDMFNSGVMMLIPDADTASVLQNYIFENTSIDGSDQGILNQFFNQNCCTDELVKDSFSREWVQLSFTYNVTIPNLGYQSSPAMNYFKPSIKLIHFIGKHKPWSLWSQKNFIKNEYHDQWNEVYEEFKEEHQLNNEVSKPKISDSDKTETPETITPVDAPPSNEPTTNQEIDTISTVEENVDNQNAEPVPNSDHSPAPNPVPLDFTKWLTTFINKDHLTNQPVNESREYSKENDNNIINSSSNRDQESPPNSTQELNSSYSVVSTQADSDEHQNAEEEDSTTDNASNSGEESHLDDISTAASSNNNVSNQPDGKNFSNSKENNISVESSPSNPEQKRSTDNIQKPSVSTNDLPDDVEPHTSVDDNIQYLEKDKEGYEEFLPDVYESNAIDNEEEFFDDDARDATEGETKTSAVADKQEDMKLTAEETNQPQQEMPNFKFDWEDSDYLSKVERCFPDDIFEYAVE</sequence>
<organism>
    <name type="scientific">Saccharomyces cerevisiae (strain ATCC 204508 / S288c)</name>
    <name type="common">Baker's yeast</name>
    <dbReference type="NCBI Taxonomy" id="559292"/>
    <lineage>
        <taxon>Eukaryota</taxon>
        <taxon>Fungi</taxon>
        <taxon>Dikarya</taxon>
        <taxon>Ascomycota</taxon>
        <taxon>Saccharomycotina</taxon>
        <taxon>Saccharomycetes</taxon>
        <taxon>Saccharomycetales</taxon>
        <taxon>Saccharomycetaceae</taxon>
        <taxon>Saccharomyces</taxon>
    </lineage>
</organism>
<dbReference type="EC" id="2.4.1.186" evidence="7"/>
<dbReference type="EMBL" id="U25546">
    <property type="protein sequence ID" value="AAA91646.1"/>
    <property type="status" value="ALT_INIT"/>
    <property type="molecule type" value="Genomic_DNA"/>
</dbReference>
<dbReference type="EMBL" id="Z28283">
    <property type="protein sequence ID" value="CAA82136.1"/>
    <property type="status" value="ALT_FRAME"/>
    <property type="molecule type" value="Genomic_DNA"/>
</dbReference>
<dbReference type="EMBL" id="BK006944">
    <property type="protein sequence ID" value="DAA09209.1"/>
    <property type="molecule type" value="Genomic_DNA"/>
</dbReference>
<dbReference type="PIR" id="S38134">
    <property type="entry name" value="S38134"/>
</dbReference>
<dbReference type="RefSeq" id="NP_012984.2">
    <property type="nucleotide sequence ID" value="NM_001179848.1"/>
</dbReference>
<dbReference type="SMR" id="P36143"/>
<dbReference type="BioGRID" id="34189">
    <property type="interactions" value="69"/>
</dbReference>
<dbReference type="FunCoup" id="P36143">
    <property type="interactions" value="146"/>
</dbReference>
<dbReference type="IntAct" id="P36143">
    <property type="interactions" value="6"/>
</dbReference>
<dbReference type="MINT" id="P36143"/>
<dbReference type="STRING" id="4932.YKR058W"/>
<dbReference type="CAZy" id="GT8">
    <property type="family name" value="Glycosyltransferase Family 8"/>
</dbReference>
<dbReference type="GlyCosmos" id="P36143">
    <property type="glycosylation" value="2 sites, No reported glycans"/>
</dbReference>
<dbReference type="GlyGen" id="P36143">
    <property type="glycosylation" value="2 sites"/>
</dbReference>
<dbReference type="iPTMnet" id="P36143"/>
<dbReference type="PaxDb" id="4932-YKR058W"/>
<dbReference type="PeptideAtlas" id="P36143"/>
<dbReference type="EnsemblFungi" id="YKR058W_mRNA">
    <property type="protein sequence ID" value="YKR058W"/>
    <property type="gene ID" value="YKR058W"/>
</dbReference>
<dbReference type="GeneID" id="853932"/>
<dbReference type="KEGG" id="sce:YKR058W"/>
<dbReference type="AGR" id="SGD:S000001766"/>
<dbReference type="SGD" id="S000001766">
    <property type="gene designation" value="GLG1"/>
</dbReference>
<dbReference type="VEuPathDB" id="FungiDB:YKR058W"/>
<dbReference type="eggNOG" id="KOG1950">
    <property type="taxonomic scope" value="Eukaryota"/>
</dbReference>
<dbReference type="GeneTree" id="ENSGT00940000175485"/>
<dbReference type="HOGENOM" id="CLU_017171_4_1_1"/>
<dbReference type="InParanoid" id="P36143"/>
<dbReference type="OMA" id="NFKFDWE"/>
<dbReference type="OrthoDB" id="2014201at2759"/>
<dbReference type="BioCyc" id="YEAST:MONOMER3O-4054"/>
<dbReference type="Reactome" id="R-SCE-3322077">
    <property type="pathway name" value="Glycogen synthesis"/>
</dbReference>
<dbReference type="Reactome" id="R-SCE-6798695">
    <property type="pathway name" value="Neutrophil degranulation"/>
</dbReference>
<dbReference type="Reactome" id="R-SCE-70221">
    <property type="pathway name" value="Glycogen breakdown (glycogenolysis)"/>
</dbReference>
<dbReference type="BioGRID-ORCS" id="853932">
    <property type="hits" value="0 hits in 10 CRISPR screens"/>
</dbReference>
<dbReference type="PRO" id="PR:P36143"/>
<dbReference type="Proteomes" id="UP000002311">
    <property type="component" value="Chromosome XI"/>
</dbReference>
<dbReference type="RNAct" id="P36143">
    <property type="molecule type" value="protein"/>
</dbReference>
<dbReference type="GO" id="GO:0005737">
    <property type="term" value="C:cytoplasm"/>
    <property type="evidence" value="ECO:0000250"/>
    <property type="project" value="UniProtKB"/>
</dbReference>
<dbReference type="GO" id="GO:0005773">
    <property type="term" value="C:vacuole"/>
    <property type="evidence" value="ECO:0000250"/>
    <property type="project" value="UniProtKB"/>
</dbReference>
<dbReference type="GO" id="GO:0008466">
    <property type="term" value="F:glycogenin glucosyltransferase activity"/>
    <property type="evidence" value="ECO:0000316"/>
    <property type="project" value="SGD"/>
</dbReference>
<dbReference type="GO" id="GO:0016757">
    <property type="term" value="F:glycosyltransferase activity"/>
    <property type="evidence" value="ECO:0000318"/>
    <property type="project" value="GO_Central"/>
</dbReference>
<dbReference type="GO" id="GO:0046872">
    <property type="term" value="F:metal ion binding"/>
    <property type="evidence" value="ECO:0007669"/>
    <property type="project" value="UniProtKB-KW"/>
</dbReference>
<dbReference type="GO" id="GO:0005978">
    <property type="term" value="P:glycogen biosynthetic process"/>
    <property type="evidence" value="ECO:0000316"/>
    <property type="project" value="SGD"/>
</dbReference>
<dbReference type="CDD" id="cd02537">
    <property type="entry name" value="GT8_Glycogenin"/>
    <property type="match status" value="1"/>
</dbReference>
<dbReference type="FunFam" id="3.90.550.10:FF:000148">
    <property type="entry name" value="Glg2p"/>
    <property type="match status" value="1"/>
</dbReference>
<dbReference type="Gene3D" id="3.90.550.10">
    <property type="entry name" value="Spore Coat Polysaccharide Biosynthesis Protein SpsA, Chain A"/>
    <property type="match status" value="1"/>
</dbReference>
<dbReference type="InterPro" id="IPR002495">
    <property type="entry name" value="Glyco_trans_8"/>
</dbReference>
<dbReference type="InterPro" id="IPR050587">
    <property type="entry name" value="GNT1/Glycosyltrans_8"/>
</dbReference>
<dbReference type="InterPro" id="IPR029044">
    <property type="entry name" value="Nucleotide-diphossugar_trans"/>
</dbReference>
<dbReference type="PANTHER" id="PTHR11183">
    <property type="entry name" value="GLYCOGENIN SUBFAMILY MEMBER"/>
    <property type="match status" value="1"/>
</dbReference>
<dbReference type="Pfam" id="PF01501">
    <property type="entry name" value="Glyco_transf_8"/>
    <property type="match status" value="1"/>
</dbReference>
<dbReference type="SUPFAM" id="SSF53448">
    <property type="entry name" value="Nucleotide-diphospho-sugar transferases"/>
    <property type="match status" value="1"/>
</dbReference>
<protein>
    <recommendedName>
        <fullName evidence="9">Glycogenin-1</fullName>
        <ecNumber evidence="7">2.4.1.186</ecNumber>
    </recommendedName>
    <alternativeName>
        <fullName evidence="9">Glycogen synthesis initiator protein 1</fullName>
    </alternativeName>
    <alternativeName>
        <fullName evidence="9">Glycogenin glucosyltransferase 1</fullName>
    </alternativeName>
</protein>
<keyword id="KW-0963">Cytoplasm</keyword>
<keyword id="KW-0320">Glycogen biosynthesis</keyword>
<keyword id="KW-0325">Glycoprotein</keyword>
<keyword id="KW-0464">Manganese</keyword>
<keyword id="KW-0479">Metal-binding</keyword>
<keyword id="KW-1185">Reference proteome</keyword>
<keyword id="KW-0808">Transferase</keyword>
<keyword id="KW-0926">Vacuole</keyword>
<name>GLG1_YEAST</name>
<gene>
    <name evidence="9" type="primary">GLG1</name>
    <name type="ordered locus">YKR058W</name>
</gene>
<evidence type="ECO:0000250" key="1">
    <source>
        <dbReference type="UniProtKB" id="C4R941"/>
    </source>
</evidence>
<evidence type="ECO:0000250" key="2">
    <source>
        <dbReference type="UniProtKB" id="P13280"/>
    </source>
</evidence>
<evidence type="ECO:0000250" key="3">
    <source>
        <dbReference type="UniProtKB" id="P46976"/>
    </source>
</evidence>
<evidence type="ECO:0000256" key="4">
    <source>
        <dbReference type="SAM" id="MobiDB-lite"/>
    </source>
</evidence>
<evidence type="ECO:0000269" key="5">
    <source>
    </source>
</evidence>
<evidence type="ECO:0000269" key="6">
    <source>
    </source>
</evidence>
<evidence type="ECO:0000269" key="7">
    <source>
    </source>
</evidence>
<evidence type="ECO:0000269" key="8">
    <source>
    </source>
</evidence>
<evidence type="ECO:0000303" key="9">
    <source>
    </source>
</evidence>
<evidence type="ECO:0000305" key="10"/>
<comment type="function">
    <text evidence="7 8">Self-glucosylating initiator of glycogen synthesis. It catalyzes the formation of a short alpha (1,4)-glucosyl chain covalently attached via a glucose 1-O-tyrosyl linkage to internal tyrosine residues and these chains act as primers for the elongation reaction catalyzed by glycogen synthase. Capable of transferring glucosyl residues to unbound acceptors such as free oligoglucans or oligoglucan derivatives.</text>
</comment>
<comment type="catalytic activity">
    <reaction evidence="7">
        <text>L-tyrosyl-[glycogenin] + UDP-alpha-D-glucose = alpha-D-glucosyl-L-tyrosyl-[glycogenin] + UDP + H(+)</text>
        <dbReference type="Rhea" id="RHEA:23360"/>
        <dbReference type="Rhea" id="RHEA-COMP:14604"/>
        <dbReference type="Rhea" id="RHEA-COMP:14605"/>
        <dbReference type="ChEBI" id="CHEBI:15378"/>
        <dbReference type="ChEBI" id="CHEBI:46858"/>
        <dbReference type="ChEBI" id="CHEBI:58223"/>
        <dbReference type="ChEBI" id="CHEBI:58885"/>
        <dbReference type="ChEBI" id="CHEBI:140573"/>
        <dbReference type="EC" id="2.4.1.186"/>
    </reaction>
</comment>
<comment type="catalytic activity">
    <reaction evidence="7">
        <text>[1,4-alpha-D-glucosyl](n)-L-tyrosyl-[glycogenin] + UDP-alpha-D-glucose = [1,4-alpha-D-glucosyl](n+1)-L-tyrosyl-[glycogenin] + UDP + H(+)</text>
        <dbReference type="Rhea" id="RHEA:56560"/>
        <dbReference type="Rhea" id="RHEA-COMP:14606"/>
        <dbReference type="Rhea" id="RHEA-COMP:14607"/>
        <dbReference type="ChEBI" id="CHEBI:15378"/>
        <dbReference type="ChEBI" id="CHEBI:58223"/>
        <dbReference type="ChEBI" id="CHEBI:58885"/>
        <dbReference type="ChEBI" id="CHEBI:140574"/>
        <dbReference type="EC" id="2.4.1.186"/>
    </reaction>
</comment>
<comment type="cofactor">
    <cofactor evidence="3">
        <name>Mn(2+)</name>
        <dbReference type="ChEBI" id="CHEBI:29035"/>
    </cofactor>
</comment>
<comment type="interaction">
    <interactant intactId="EBI-2064417">
        <id>P36143</id>
    </interactant>
    <interactant intactId="EBI-8036">
        <id>P27472</id>
        <label>GSY2</label>
    </interactant>
    <organismsDiffer>false</organismsDiffer>
    <experiments>3</experiments>
</comment>
<comment type="subcellular location">
    <subcellularLocation>
        <location evidence="1">Cytoplasm</location>
    </subcellularLocation>
    <subcellularLocation>
        <location evidence="1">Vacuole</location>
    </subcellularLocation>
    <text evidence="1">Localizes to glycogen granules (glycosomes) in the cytoplasm. Localizes to the vacuole during nitrogen starvation-induced glycophagy (autophagy of glycosomes).</text>
</comment>
<comment type="induction">
    <text evidence="5">Induced during the diauxic transition.</text>
</comment>
<comment type="disruption phenotype">
    <text evidence="6">Simultaneous knockout of GLG2 abolishes glycogen biosynthesis.</text>
</comment>
<comment type="similarity">
    <text evidence="10">Belongs to the glycosyltransferase 8 family. Glycogenin subfamily.</text>
</comment>
<comment type="sequence caution" evidence="10">
    <conflict type="erroneous initiation">
        <sequence resource="EMBL-CDS" id="AAA91646"/>
    </conflict>
    <text>Truncated N-terminus.</text>
</comment>
<comment type="sequence caution" evidence="10">
    <conflict type="erroneous initiation">
        <sequence resource="EMBL-CDS" id="CAA82136"/>
    </conflict>
    <text>Truncated N-terminus.</text>
</comment>
<comment type="sequence caution" evidence="10">
    <conflict type="frameshift">
        <sequence resource="EMBL-CDS" id="CAA82136"/>
    </conflict>
</comment>
<feature type="chain" id="PRO_0000215181" description="Glycogenin-1">
    <location>
        <begin position="1"/>
        <end position="616"/>
    </location>
</feature>
<feature type="region of interest" description="Disordered" evidence="4">
    <location>
        <begin position="283"/>
        <end position="320"/>
    </location>
</feature>
<feature type="region of interest" description="Disordered" evidence="4">
    <location>
        <begin position="335"/>
        <end position="354"/>
    </location>
</feature>
<feature type="region of interest" description="Disordered" evidence="4">
    <location>
        <begin position="371"/>
        <end position="525"/>
    </location>
</feature>
<feature type="region of interest" description="Disordered" evidence="4">
    <location>
        <begin position="553"/>
        <end position="588"/>
    </location>
</feature>
<feature type="compositionally biased region" description="Basic and acidic residues" evidence="4">
    <location>
        <begin position="283"/>
        <end position="302"/>
    </location>
</feature>
<feature type="compositionally biased region" description="Basic and acidic residues" evidence="4">
    <location>
        <begin position="377"/>
        <end position="386"/>
    </location>
</feature>
<feature type="compositionally biased region" description="Polar residues" evidence="4">
    <location>
        <begin position="400"/>
        <end position="419"/>
    </location>
</feature>
<feature type="compositionally biased region" description="Low complexity" evidence="4">
    <location>
        <begin position="450"/>
        <end position="461"/>
    </location>
</feature>
<feature type="compositionally biased region" description="Polar residues" evidence="4">
    <location>
        <begin position="462"/>
        <end position="485"/>
    </location>
</feature>
<feature type="compositionally biased region" description="Polar residues" evidence="4">
    <location>
        <begin position="492"/>
        <end position="503"/>
    </location>
</feature>
<feature type="compositionally biased region" description="Basic and acidic residues" evidence="4">
    <location>
        <begin position="567"/>
        <end position="576"/>
    </location>
</feature>
<feature type="compositionally biased region" description="Polar residues" evidence="4">
    <location>
        <begin position="577"/>
        <end position="586"/>
    </location>
</feature>
<feature type="binding site" evidence="3">
    <location>
        <position position="10"/>
    </location>
    <ligand>
        <name>UDP</name>
        <dbReference type="ChEBI" id="CHEBI:58223"/>
    </ligand>
</feature>
<feature type="binding site" evidence="3">
    <location>
        <position position="10"/>
    </location>
    <ligand>
        <name>UDP-alpha-D-glucose</name>
        <dbReference type="ChEBI" id="CHEBI:58885"/>
    </ligand>
</feature>
<feature type="binding site" evidence="3">
    <location>
        <position position="16"/>
    </location>
    <ligand>
        <name>UDP</name>
        <dbReference type="ChEBI" id="CHEBI:58223"/>
    </ligand>
</feature>
<feature type="binding site" evidence="3">
    <location>
        <position position="16"/>
    </location>
    <ligand>
        <name>UDP-alpha-D-glucose</name>
        <dbReference type="ChEBI" id="CHEBI:58885"/>
    </ligand>
</feature>
<feature type="binding site" evidence="3">
    <location>
        <position position="95"/>
    </location>
    <ligand>
        <name>UDP</name>
        <dbReference type="ChEBI" id="CHEBI:58223"/>
    </ligand>
</feature>
<feature type="binding site" evidence="3">
    <location>
        <position position="95"/>
    </location>
    <ligand>
        <name>UDP-alpha-D-glucose</name>
        <dbReference type="ChEBI" id="CHEBI:58885"/>
    </ligand>
</feature>
<feature type="binding site" evidence="3">
    <location>
        <position position="104"/>
    </location>
    <ligand>
        <name>UDP-alpha-D-glucose</name>
        <dbReference type="ChEBI" id="CHEBI:58885"/>
    </ligand>
</feature>
<feature type="binding site" evidence="3">
    <location>
        <position position="120"/>
    </location>
    <ligand>
        <name>Mn(2+)</name>
        <dbReference type="ChEBI" id="CHEBI:29035"/>
    </ligand>
</feature>
<feature type="binding site" evidence="2">
    <location>
        <position position="120"/>
    </location>
    <ligand>
        <name>UDP</name>
        <dbReference type="ChEBI" id="CHEBI:58223"/>
    </ligand>
</feature>
<feature type="binding site" evidence="3">
    <location>
        <position position="120"/>
    </location>
    <ligand>
        <name>UDP-alpha-D-glucose</name>
        <dbReference type="ChEBI" id="CHEBI:58885"/>
    </ligand>
</feature>
<feature type="binding site" evidence="3">
    <location>
        <position position="122"/>
    </location>
    <ligand>
        <name>Mn(2+)</name>
        <dbReference type="ChEBI" id="CHEBI:29035"/>
    </ligand>
</feature>
<feature type="binding site" evidence="3">
    <location>
        <position position="122"/>
    </location>
    <ligand>
        <name>UDP</name>
        <dbReference type="ChEBI" id="CHEBI:58223"/>
    </ligand>
</feature>
<feature type="binding site" evidence="3">
    <location>
        <position position="122"/>
    </location>
    <ligand>
        <name>UDP-alpha-D-glucose</name>
        <dbReference type="ChEBI" id="CHEBI:58885"/>
    </ligand>
</feature>
<feature type="binding site" evidence="3">
    <location>
        <position position="158"/>
    </location>
    <ligand>
        <name>UDP-alpha-D-glucose</name>
        <dbReference type="ChEBI" id="CHEBI:58885"/>
    </ligand>
</feature>
<feature type="binding site" evidence="3">
    <location>
        <position position="159"/>
    </location>
    <ligand>
        <name>UDP-alpha-D-glucose</name>
        <dbReference type="ChEBI" id="CHEBI:58885"/>
    </ligand>
</feature>
<feature type="binding site" evidence="3">
    <location>
        <position position="185"/>
    </location>
    <ligand>
        <name>UDP-alpha-D-glucose</name>
        <dbReference type="ChEBI" id="CHEBI:58885"/>
    </ligand>
</feature>
<feature type="binding site" evidence="3">
    <location>
        <position position="188"/>
    </location>
    <ligand>
        <name>UDP-alpha-D-glucose</name>
        <dbReference type="ChEBI" id="CHEBI:58885"/>
    </ligand>
</feature>
<feature type="binding site" evidence="3">
    <location>
        <position position="189"/>
    </location>
    <ligand>
        <name>UDP-alpha-D-glucose</name>
        <dbReference type="ChEBI" id="CHEBI:58885"/>
    </ligand>
</feature>
<feature type="binding site" evidence="3">
    <location>
        <position position="247"/>
    </location>
    <ligand>
        <name>Mn(2+)</name>
        <dbReference type="ChEBI" id="CHEBI:29035"/>
    </ligand>
</feature>
<feature type="binding site" evidence="2">
    <location>
        <position position="247"/>
    </location>
    <ligand>
        <name>UDP</name>
        <dbReference type="ChEBI" id="CHEBI:58223"/>
    </ligand>
</feature>
<feature type="binding site" evidence="3">
    <location>
        <position position="250"/>
    </location>
    <ligand>
        <name>UDP</name>
        <dbReference type="ChEBI" id="CHEBI:58223"/>
    </ligand>
</feature>
<feature type="binding site" evidence="3">
    <location>
        <position position="250"/>
    </location>
    <ligand>
        <name>UDP-alpha-D-glucose</name>
        <dbReference type="ChEBI" id="CHEBI:58885"/>
    </ligand>
</feature>
<feature type="binding site" evidence="3">
    <location>
        <position position="253"/>
    </location>
    <ligand>
        <name>UDP</name>
        <dbReference type="ChEBI" id="CHEBI:58223"/>
    </ligand>
</feature>
<feature type="binding site" evidence="3">
    <location>
        <position position="253"/>
    </location>
    <ligand>
        <name>UDP-alpha-D-glucose</name>
        <dbReference type="ChEBI" id="CHEBI:58885"/>
    </ligand>
</feature>
<feature type="site" description="Important for catalytic activity" evidence="2">
    <location>
        <position position="104"/>
    </location>
</feature>
<feature type="glycosylation site" description="O-linked (Glc...) tyrosine" evidence="3">
    <location>
        <position position="230"/>
    </location>
</feature>
<feature type="glycosylation site" description="O-linked (Glc...) tyrosine" evidence="10">
    <location>
        <position position="598"/>
    </location>
</feature>
<feature type="mutagenesis site" description="Eliminates glycogen accumulation; when associated with F-598." evidence="8">
    <original>Y</original>
    <variation>F</variation>
    <location>
        <position position="230"/>
    </location>
</feature>
<feature type="mutagenesis site" description="Eliminates glycogen accumulation; when associated with F-230." evidence="8">
    <original>Y</original>
    <variation>F</variation>
    <location>
        <position position="598"/>
    </location>
</feature>
<proteinExistence type="evidence at protein level"/>
<reference key="1">
    <citation type="journal article" date="1995" name="Mol. Cell. Biol.">
        <title>Requirement of the self-glucosylating initiator proteins Glg1p and Glg2p for glycogen accumulation in Saccharomyces cerevisiae.</title>
        <authorList>
            <person name="Cheng C."/>
            <person name="Mu J."/>
            <person name="Farkas I."/>
            <person name="Huang D."/>
            <person name="Goebl M.G."/>
            <person name="Roach P.J."/>
        </authorList>
    </citation>
    <scope>NUCLEOTIDE SEQUENCE [GENOMIC DNA]</scope>
    <scope>FUNCTION</scope>
    <scope>CATALYTIC ACTIVITY</scope>
</reference>
<reference key="2">
    <citation type="journal article" date="1994" name="Nature">
        <title>Complete DNA sequence of yeast chromosome XI.</title>
        <authorList>
            <person name="Dujon B."/>
            <person name="Alexandraki D."/>
            <person name="Andre B."/>
            <person name="Ansorge W."/>
            <person name="Baladron V."/>
            <person name="Ballesta J.P.G."/>
            <person name="Banrevi A."/>
            <person name="Bolle P.-A."/>
            <person name="Bolotin-Fukuhara M."/>
            <person name="Bossier P."/>
            <person name="Bou G."/>
            <person name="Boyer J."/>
            <person name="Buitrago M.J."/>
            <person name="Cheret G."/>
            <person name="Colleaux L."/>
            <person name="Daignan-Fornier B."/>
            <person name="del Rey F."/>
            <person name="Dion C."/>
            <person name="Domdey H."/>
            <person name="Duesterhoeft A."/>
            <person name="Duesterhus S."/>
            <person name="Entian K.-D."/>
            <person name="Erfle H."/>
            <person name="Esteban P.F."/>
            <person name="Feldmann H."/>
            <person name="Fernandes L."/>
            <person name="Fobo G.M."/>
            <person name="Fritz C."/>
            <person name="Fukuhara H."/>
            <person name="Gabel C."/>
            <person name="Gaillon L."/>
            <person name="Garcia-Cantalejo J.M."/>
            <person name="Garcia-Ramirez J.J."/>
            <person name="Gent M.E."/>
            <person name="Ghazvini M."/>
            <person name="Goffeau A."/>
            <person name="Gonzalez A."/>
            <person name="Grothues D."/>
            <person name="Guerreiro P."/>
            <person name="Hegemann J.H."/>
            <person name="Hewitt N."/>
            <person name="Hilger F."/>
            <person name="Hollenberg C.P."/>
            <person name="Horaitis O."/>
            <person name="Indge K.J."/>
            <person name="Jacquier A."/>
            <person name="James C.M."/>
            <person name="Jauniaux J.-C."/>
            <person name="Jimenez A."/>
            <person name="Keuchel H."/>
            <person name="Kirchrath L."/>
            <person name="Kleine K."/>
            <person name="Koetter P."/>
            <person name="Legrain P."/>
            <person name="Liebl S."/>
            <person name="Louis E.J."/>
            <person name="Maia e Silva A."/>
            <person name="Marck C."/>
            <person name="Monnier A.-L."/>
            <person name="Moestl D."/>
            <person name="Mueller S."/>
            <person name="Obermaier B."/>
            <person name="Oliver S.G."/>
            <person name="Pallier C."/>
            <person name="Pascolo S."/>
            <person name="Pfeiffer F."/>
            <person name="Philippsen P."/>
            <person name="Planta R.J."/>
            <person name="Pohl F.M."/>
            <person name="Pohl T.M."/>
            <person name="Poehlmann R."/>
            <person name="Portetelle D."/>
            <person name="Purnelle B."/>
            <person name="Puzos V."/>
            <person name="Ramezani Rad M."/>
            <person name="Rasmussen S.W."/>
            <person name="Remacha M.A."/>
            <person name="Revuelta J.L."/>
            <person name="Richard G.-F."/>
            <person name="Rieger M."/>
            <person name="Rodrigues-Pousada C."/>
            <person name="Rose M."/>
            <person name="Rupp T."/>
            <person name="Santos M.A."/>
            <person name="Schwager C."/>
            <person name="Sensen C."/>
            <person name="Skala J."/>
            <person name="Soares H."/>
            <person name="Sor F."/>
            <person name="Stegemann J."/>
            <person name="Tettelin H."/>
            <person name="Thierry A."/>
            <person name="Tzermia M."/>
            <person name="Urrestarazu L.A."/>
            <person name="van Dyck L."/>
            <person name="van Vliet-Reedijk J.C."/>
            <person name="Valens M."/>
            <person name="Vandenbol M."/>
            <person name="Vilela C."/>
            <person name="Vissers S."/>
            <person name="von Wettstein D."/>
            <person name="Voss H."/>
            <person name="Wiemann S."/>
            <person name="Xu G."/>
            <person name="Zimmermann J."/>
            <person name="Haasemann M."/>
            <person name="Becker I."/>
            <person name="Mewes H.-W."/>
        </authorList>
    </citation>
    <scope>NUCLEOTIDE SEQUENCE [LARGE SCALE GENOMIC DNA]</scope>
    <source>
        <strain>ATCC 204508 / S288c</strain>
    </source>
</reference>
<reference key="3">
    <citation type="journal article" date="2014" name="G3 (Bethesda)">
        <title>The reference genome sequence of Saccharomyces cerevisiae: Then and now.</title>
        <authorList>
            <person name="Engel S.R."/>
            <person name="Dietrich F.S."/>
            <person name="Fisk D.G."/>
            <person name="Binkley G."/>
            <person name="Balakrishnan R."/>
            <person name="Costanzo M.C."/>
            <person name="Dwight S.S."/>
            <person name="Hitz B.C."/>
            <person name="Karra K."/>
            <person name="Nash R.S."/>
            <person name="Weng S."/>
            <person name="Wong E.D."/>
            <person name="Lloyd P."/>
            <person name="Skrzypek M.S."/>
            <person name="Miyasato S.R."/>
            <person name="Simison M."/>
            <person name="Cherry J.M."/>
        </authorList>
    </citation>
    <scope>GENOME REANNOTATION</scope>
    <source>
        <strain>ATCC 204508 / S288c</strain>
    </source>
</reference>
<reference key="4">
    <citation type="journal article" date="1996" name="J. Biol. Chem.">
        <title>Initiation of glycogen synthesis in yeast. Requirement of multiple tyrosine residues for function of the self-glucosylating Glg proteins in vivo.</title>
        <authorList>
            <person name="Mu J."/>
            <person name="Cheng C."/>
            <person name="Roach P.J."/>
        </authorList>
    </citation>
    <scope>FUNCTION</scope>
    <scope>MUTAGENESIS OF TYR-230 AND TYR-598</scope>
</reference>
<reference key="5">
    <citation type="journal article" date="1999" name="Yeast">
        <title>Dynamic responses of reserve carbohydrate metabolism under carbon and nitrogen limitations in Saccharomyces cerevisiae.</title>
        <authorList>
            <person name="Parrou J.L."/>
            <person name="Enjalbert B."/>
            <person name="Plourde L."/>
            <person name="Bauche A."/>
            <person name="Gonzalez B."/>
            <person name="Francois J."/>
        </authorList>
    </citation>
    <scope>INDUCTION</scope>
</reference>
<reference key="6">
    <citation type="journal article" date="2003" name="Genome Biol.">
        <title>Reinvestigation of the Saccharomyces cerevisiae genome annotation by comparison to the genome of a related fungus: Ashbya gossypii.</title>
        <authorList>
            <person name="Brachat S."/>
            <person name="Dietrich F.S."/>
            <person name="Voegeli S."/>
            <person name="Zhang Z."/>
            <person name="Stuart L."/>
            <person name="Lerch A."/>
            <person name="Gates K."/>
            <person name="Gaffney T.D."/>
            <person name="Philippsen P."/>
        </authorList>
    </citation>
    <scope>IDENTIFICATION OF PROBABLE INITIATION SITE</scope>
</reference>
<reference key="7">
    <citation type="journal article" date="2003" name="Science">
        <title>Finding functional features in Saccharomyces genomes by phylogenetic footprinting.</title>
        <authorList>
            <person name="Cliften P.F."/>
            <person name="Sudarsanam P."/>
            <person name="Desikan A."/>
            <person name="Fulton L."/>
            <person name="Fulton B."/>
            <person name="Majors J."/>
            <person name="Waterston R."/>
            <person name="Cohen B.A."/>
            <person name="Johnston M."/>
        </authorList>
    </citation>
    <scope>IDENTIFICATION OF PROBABLE INITIATION SITE</scope>
</reference>
<reference key="8">
    <citation type="journal article" date="2009" name="Science">
        <title>Global analysis of Cdk1 substrate phosphorylation sites provides insights into evolution.</title>
        <authorList>
            <person name="Holt L.J."/>
            <person name="Tuch B.B."/>
            <person name="Villen J."/>
            <person name="Johnson A.D."/>
            <person name="Gygi S.P."/>
            <person name="Morgan D.O."/>
        </authorList>
    </citation>
    <scope>IDENTIFICATION BY MASS SPECTROMETRY [LARGE SCALE ANALYSIS]</scope>
</reference>
<reference key="9">
    <citation type="journal article" date="2024" name="IScience">
        <title>Atg45 is an autophagy receptor for glycogen, a non-preferred cargo of bulk autophagy in yeast.</title>
        <authorList>
            <person name="Isoda T."/>
            <person name="Takeda E."/>
            <person name="Hosokawa S."/>
            <person name="Hotta-Ren S."/>
            <person name="Ohsumi Y."/>
        </authorList>
    </citation>
    <scope>DISRUPTION PHENOTYPE</scope>
</reference>